<accession>A1TDM2</accession>
<name>Y4497_MYCVP</name>
<reference key="1">
    <citation type="submission" date="2006-12" db="EMBL/GenBank/DDBJ databases">
        <title>Complete sequence of Mycobacterium vanbaalenii PYR-1.</title>
        <authorList>
            <consortium name="US DOE Joint Genome Institute"/>
            <person name="Copeland A."/>
            <person name="Lucas S."/>
            <person name="Lapidus A."/>
            <person name="Barry K."/>
            <person name="Detter J.C."/>
            <person name="Glavina del Rio T."/>
            <person name="Hammon N."/>
            <person name="Israni S."/>
            <person name="Dalin E."/>
            <person name="Tice H."/>
            <person name="Pitluck S."/>
            <person name="Singan V."/>
            <person name="Schmutz J."/>
            <person name="Larimer F."/>
            <person name="Land M."/>
            <person name="Hauser L."/>
            <person name="Kyrpides N."/>
            <person name="Anderson I.J."/>
            <person name="Miller C."/>
            <person name="Richardson P."/>
        </authorList>
    </citation>
    <scope>NUCLEOTIDE SEQUENCE [LARGE SCALE GENOMIC DNA]</scope>
    <source>
        <strain>DSM 7251 / JCM 13017 / BCRC 16820 / KCTC 9966 / NRRL B-24157 / PYR-1</strain>
    </source>
</reference>
<organism>
    <name type="scientific">Mycolicibacterium vanbaalenii (strain DSM 7251 / JCM 13017 / BCRC 16820 / KCTC 9966 / NRRL B-24157 / PYR-1)</name>
    <name type="common">Mycobacterium vanbaalenii</name>
    <dbReference type="NCBI Taxonomy" id="350058"/>
    <lineage>
        <taxon>Bacteria</taxon>
        <taxon>Bacillati</taxon>
        <taxon>Actinomycetota</taxon>
        <taxon>Actinomycetes</taxon>
        <taxon>Mycobacteriales</taxon>
        <taxon>Mycobacteriaceae</taxon>
        <taxon>Mycolicibacterium</taxon>
    </lineage>
</organism>
<gene>
    <name type="ordered locus">Mvan_4497</name>
</gene>
<evidence type="ECO:0000250" key="1"/>
<evidence type="ECO:0000255" key="2">
    <source>
        <dbReference type="PROSITE-ProRule" id="PRU01019"/>
    </source>
</evidence>
<evidence type="ECO:0000305" key="3"/>
<feature type="chain" id="PRO_0000380107" description="Putative O-methyltransferase Mvan_4497">
    <location>
        <begin position="1"/>
        <end position="226"/>
    </location>
</feature>
<feature type="binding site" evidence="2">
    <location>
        <position position="53"/>
    </location>
    <ligand>
        <name>S-adenosyl-L-methionine</name>
        <dbReference type="ChEBI" id="CHEBI:59789"/>
    </ligand>
</feature>
<feature type="binding site" evidence="2">
    <location>
        <position position="75"/>
    </location>
    <ligand>
        <name>S-adenosyl-L-methionine</name>
        <dbReference type="ChEBI" id="CHEBI:59789"/>
    </ligand>
</feature>
<feature type="binding site" evidence="2">
    <location>
        <begin position="77"/>
        <end position="78"/>
    </location>
    <ligand>
        <name>S-adenosyl-L-methionine</name>
        <dbReference type="ChEBI" id="CHEBI:59789"/>
    </ligand>
</feature>
<feature type="binding site" evidence="2">
    <location>
        <position position="83"/>
    </location>
    <ligand>
        <name>S-adenosyl-L-methionine</name>
        <dbReference type="ChEBI" id="CHEBI:59789"/>
    </ligand>
</feature>
<feature type="binding site" evidence="2">
    <location>
        <position position="101"/>
    </location>
    <ligand>
        <name>S-adenosyl-L-methionine</name>
        <dbReference type="ChEBI" id="CHEBI:59789"/>
    </ligand>
</feature>
<feature type="binding site" evidence="2">
    <location>
        <position position="102"/>
    </location>
    <ligand>
        <name>S-adenosyl-L-methionine</name>
        <dbReference type="ChEBI" id="CHEBI:59789"/>
    </ligand>
</feature>
<feature type="binding site" evidence="1">
    <location>
        <position position="149"/>
    </location>
    <ligand>
        <name>substrate</name>
    </ligand>
</feature>
<keyword id="KW-0489">Methyltransferase</keyword>
<keyword id="KW-0949">S-adenosyl-L-methionine</keyword>
<keyword id="KW-0808">Transferase</keyword>
<comment type="similarity">
    <text evidence="2">Belongs to the class I-like SAM-binding methyltransferase superfamily. Cation-dependent O-methyltransferase family.</text>
</comment>
<comment type="sequence caution" evidence="3">
    <conflict type="erroneous initiation">
        <sequence resource="EMBL-CDS" id="ABM15272"/>
    </conflict>
</comment>
<dbReference type="EC" id="2.1.1.-"/>
<dbReference type="EMBL" id="CP000511">
    <property type="protein sequence ID" value="ABM15272.1"/>
    <property type="status" value="ALT_INIT"/>
    <property type="molecule type" value="Genomic_DNA"/>
</dbReference>
<dbReference type="RefSeq" id="WP_041306948.1">
    <property type="nucleotide sequence ID" value="NZ_JACKSD010000175.1"/>
</dbReference>
<dbReference type="SMR" id="A1TDM2"/>
<dbReference type="STRING" id="350058.Mvan_4497"/>
<dbReference type="KEGG" id="mva:Mvan_4497"/>
<dbReference type="eggNOG" id="COG4122">
    <property type="taxonomic scope" value="Bacteria"/>
</dbReference>
<dbReference type="HOGENOM" id="CLU_067676_2_0_11"/>
<dbReference type="Proteomes" id="UP000009159">
    <property type="component" value="Chromosome"/>
</dbReference>
<dbReference type="GO" id="GO:0008171">
    <property type="term" value="F:O-methyltransferase activity"/>
    <property type="evidence" value="ECO:0007669"/>
    <property type="project" value="InterPro"/>
</dbReference>
<dbReference type="GO" id="GO:0008757">
    <property type="term" value="F:S-adenosylmethionine-dependent methyltransferase activity"/>
    <property type="evidence" value="ECO:0007669"/>
    <property type="project" value="TreeGrafter"/>
</dbReference>
<dbReference type="GO" id="GO:0032259">
    <property type="term" value="P:methylation"/>
    <property type="evidence" value="ECO:0007669"/>
    <property type="project" value="UniProtKB-KW"/>
</dbReference>
<dbReference type="CDD" id="cd02440">
    <property type="entry name" value="AdoMet_MTases"/>
    <property type="match status" value="1"/>
</dbReference>
<dbReference type="Gene3D" id="3.40.50.150">
    <property type="entry name" value="Vaccinia Virus protein VP39"/>
    <property type="match status" value="1"/>
</dbReference>
<dbReference type="InterPro" id="IPR050362">
    <property type="entry name" value="Cation-dep_OMT"/>
</dbReference>
<dbReference type="InterPro" id="IPR029063">
    <property type="entry name" value="SAM-dependent_MTases_sf"/>
</dbReference>
<dbReference type="InterPro" id="IPR002935">
    <property type="entry name" value="SAM_O-MeTrfase"/>
</dbReference>
<dbReference type="PANTHER" id="PTHR10509:SF85">
    <property type="entry name" value="O-METHYLTRANSFERASE RV1220C-RELATED"/>
    <property type="match status" value="1"/>
</dbReference>
<dbReference type="PANTHER" id="PTHR10509">
    <property type="entry name" value="O-METHYLTRANSFERASE-RELATED"/>
    <property type="match status" value="1"/>
</dbReference>
<dbReference type="Pfam" id="PF01596">
    <property type="entry name" value="Methyltransf_3"/>
    <property type="match status" value="1"/>
</dbReference>
<dbReference type="SUPFAM" id="SSF53335">
    <property type="entry name" value="S-adenosyl-L-methionine-dependent methyltransferases"/>
    <property type="match status" value="1"/>
</dbReference>
<dbReference type="PROSITE" id="PS51682">
    <property type="entry name" value="SAM_OMT_I"/>
    <property type="match status" value="1"/>
</dbReference>
<protein>
    <recommendedName>
        <fullName>Putative O-methyltransferase Mvan_4497</fullName>
        <ecNumber>2.1.1.-</ecNumber>
    </recommendedName>
</protein>
<proteinExistence type="inferred from homology"/>
<sequence length="226" mass="23157">MASTDEPGVGSGDPTARARQAEAIVNHAEHSISEDAIVAAARERAVDIGAGAVSPAVGALLCVLAKLTGARAVVEVGTGAGVSGLWLLSGMREDGVLTTIDVEPEHQRIAKQAFSEAGVGPGRTRLISGRAQEVLTRLADESYDLVFIDAAPADQPHFVTEGVRLLRPGGAIVVHRAALGGRAGDATAKDSEVAAVREAARLIAEDDRLTPVLIPLGDGLLAAARD</sequence>